<keyword id="KW-1185">Reference proteome</keyword>
<keyword id="KW-0687">Ribonucleoprotein</keyword>
<keyword id="KW-0689">Ribosomal protein</keyword>
<keyword id="KW-0694">RNA-binding</keyword>
<keyword id="KW-0699">rRNA-binding</keyword>
<keyword id="KW-0820">tRNA-binding</keyword>
<accession>Q5P325</accession>
<proteinExistence type="inferred from homology"/>
<reference key="1">
    <citation type="journal article" date="2005" name="Arch. Microbiol.">
        <title>The genome sequence of an anaerobic aromatic-degrading denitrifying bacterium, strain EbN1.</title>
        <authorList>
            <person name="Rabus R."/>
            <person name="Kube M."/>
            <person name="Heider J."/>
            <person name="Beck A."/>
            <person name="Heitmann K."/>
            <person name="Widdel F."/>
            <person name="Reinhardt R."/>
        </authorList>
    </citation>
    <scope>NUCLEOTIDE SEQUENCE [LARGE SCALE GENOMIC DNA]</scope>
    <source>
        <strain>DSM 19018 / LMG 30748 / EbN1</strain>
    </source>
</reference>
<sequence>MLQPSRRKYRKEQKGRNTGIATRGAKVSFGEFGLKAIGRGRLTARQIESARRAMTRHIKRGGRIWIRIFPDKPISKKPAEVRMGNGKGNPEYWVAEIQPGKVLYEMDGVDETLAREAFRLAAAKLPLETVFVHRQMG</sequence>
<gene>
    <name evidence="1" type="primary">rplP</name>
    <name type="ordered locus">AZOSEA21640</name>
    <name type="ORF">ebA3834</name>
</gene>
<name>RL16_AROAE</name>
<dbReference type="EMBL" id="CR555306">
    <property type="protein sequence ID" value="CAI08289.1"/>
    <property type="molecule type" value="Genomic_DNA"/>
</dbReference>
<dbReference type="RefSeq" id="WP_011237979.1">
    <property type="nucleotide sequence ID" value="NC_006513.1"/>
</dbReference>
<dbReference type="SMR" id="Q5P325"/>
<dbReference type="STRING" id="76114.ebA3834"/>
<dbReference type="KEGG" id="eba:ebA3834"/>
<dbReference type="eggNOG" id="COG0197">
    <property type="taxonomic scope" value="Bacteria"/>
</dbReference>
<dbReference type="HOGENOM" id="CLU_078858_2_1_4"/>
<dbReference type="OrthoDB" id="9802589at2"/>
<dbReference type="Proteomes" id="UP000006552">
    <property type="component" value="Chromosome"/>
</dbReference>
<dbReference type="GO" id="GO:0022625">
    <property type="term" value="C:cytosolic large ribosomal subunit"/>
    <property type="evidence" value="ECO:0007669"/>
    <property type="project" value="TreeGrafter"/>
</dbReference>
<dbReference type="GO" id="GO:0019843">
    <property type="term" value="F:rRNA binding"/>
    <property type="evidence" value="ECO:0007669"/>
    <property type="project" value="UniProtKB-UniRule"/>
</dbReference>
<dbReference type="GO" id="GO:0003735">
    <property type="term" value="F:structural constituent of ribosome"/>
    <property type="evidence" value="ECO:0007669"/>
    <property type="project" value="InterPro"/>
</dbReference>
<dbReference type="GO" id="GO:0000049">
    <property type="term" value="F:tRNA binding"/>
    <property type="evidence" value="ECO:0007669"/>
    <property type="project" value="UniProtKB-KW"/>
</dbReference>
<dbReference type="GO" id="GO:0006412">
    <property type="term" value="P:translation"/>
    <property type="evidence" value="ECO:0007669"/>
    <property type="project" value="UniProtKB-UniRule"/>
</dbReference>
<dbReference type="CDD" id="cd01433">
    <property type="entry name" value="Ribosomal_L16_L10e"/>
    <property type="match status" value="1"/>
</dbReference>
<dbReference type="FunFam" id="3.90.1170.10:FF:000001">
    <property type="entry name" value="50S ribosomal protein L16"/>
    <property type="match status" value="1"/>
</dbReference>
<dbReference type="Gene3D" id="3.90.1170.10">
    <property type="entry name" value="Ribosomal protein L10e/L16"/>
    <property type="match status" value="1"/>
</dbReference>
<dbReference type="HAMAP" id="MF_01342">
    <property type="entry name" value="Ribosomal_uL16"/>
    <property type="match status" value="1"/>
</dbReference>
<dbReference type="InterPro" id="IPR047873">
    <property type="entry name" value="Ribosomal_uL16"/>
</dbReference>
<dbReference type="InterPro" id="IPR000114">
    <property type="entry name" value="Ribosomal_uL16_bact-type"/>
</dbReference>
<dbReference type="InterPro" id="IPR020798">
    <property type="entry name" value="Ribosomal_uL16_CS"/>
</dbReference>
<dbReference type="InterPro" id="IPR016180">
    <property type="entry name" value="Ribosomal_uL16_dom"/>
</dbReference>
<dbReference type="InterPro" id="IPR036920">
    <property type="entry name" value="Ribosomal_uL16_sf"/>
</dbReference>
<dbReference type="NCBIfam" id="TIGR01164">
    <property type="entry name" value="rplP_bact"/>
    <property type="match status" value="1"/>
</dbReference>
<dbReference type="PANTHER" id="PTHR12220">
    <property type="entry name" value="50S/60S RIBOSOMAL PROTEIN L16"/>
    <property type="match status" value="1"/>
</dbReference>
<dbReference type="PANTHER" id="PTHR12220:SF13">
    <property type="entry name" value="LARGE RIBOSOMAL SUBUNIT PROTEIN UL16M"/>
    <property type="match status" value="1"/>
</dbReference>
<dbReference type="Pfam" id="PF00252">
    <property type="entry name" value="Ribosomal_L16"/>
    <property type="match status" value="1"/>
</dbReference>
<dbReference type="PRINTS" id="PR00060">
    <property type="entry name" value="RIBOSOMALL16"/>
</dbReference>
<dbReference type="SUPFAM" id="SSF54686">
    <property type="entry name" value="Ribosomal protein L16p/L10e"/>
    <property type="match status" value="1"/>
</dbReference>
<dbReference type="PROSITE" id="PS00586">
    <property type="entry name" value="RIBOSOMAL_L16_1"/>
    <property type="match status" value="1"/>
</dbReference>
<dbReference type="PROSITE" id="PS00701">
    <property type="entry name" value="RIBOSOMAL_L16_2"/>
    <property type="match status" value="1"/>
</dbReference>
<organism>
    <name type="scientific">Aromatoleum aromaticum (strain DSM 19018 / LMG 30748 / EbN1)</name>
    <name type="common">Azoarcus sp. (strain EbN1)</name>
    <dbReference type="NCBI Taxonomy" id="76114"/>
    <lineage>
        <taxon>Bacteria</taxon>
        <taxon>Pseudomonadati</taxon>
        <taxon>Pseudomonadota</taxon>
        <taxon>Betaproteobacteria</taxon>
        <taxon>Rhodocyclales</taxon>
        <taxon>Rhodocyclaceae</taxon>
        <taxon>Aromatoleum</taxon>
    </lineage>
</organism>
<feature type="chain" id="PRO_0000062034" description="Large ribosomal subunit protein uL16">
    <location>
        <begin position="1"/>
        <end position="137"/>
    </location>
</feature>
<evidence type="ECO:0000255" key="1">
    <source>
        <dbReference type="HAMAP-Rule" id="MF_01342"/>
    </source>
</evidence>
<evidence type="ECO:0000305" key="2"/>
<protein>
    <recommendedName>
        <fullName evidence="1">Large ribosomal subunit protein uL16</fullName>
    </recommendedName>
    <alternativeName>
        <fullName evidence="2">50S ribosomal protein L16</fullName>
    </alternativeName>
</protein>
<comment type="function">
    <text evidence="1">Binds 23S rRNA and is also seen to make contacts with the A and possibly P site tRNAs.</text>
</comment>
<comment type="subunit">
    <text evidence="1">Part of the 50S ribosomal subunit.</text>
</comment>
<comment type="similarity">
    <text evidence="1">Belongs to the universal ribosomal protein uL16 family.</text>
</comment>